<organism>
    <name type="scientific">Streptococcus pneumoniae serotype 19F (strain G54)</name>
    <dbReference type="NCBI Taxonomy" id="512566"/>
    <lineage>
        <taxon>Bacteria</taxon>
        <taxon>Bacillati</taxon>
        <taxon>Bacillota</taxon>
        <taxon>Bacilli</taxon>
        <taxon>Lactobacillales</taxon>
        <taxon>Streptococcaceae</taxon>
        <taxon>Streptococcus</taxon>
    </lineage>
</organism>
<proteinExistence type="inferred from homology"/>
<accession>B5E2E0</accession>
<gene>
    <name evidence="1" type="primary">recA</name>
    <name type="ordered locus">SPG_1849</name>
</gene>
<protein>
    <recommendedName>
        <fullName evidence="1">Protein RecA</fullName>
    </recommendedName>
    <alternativeName>
        <fullName evidence="1">Recombinase A</fullName>
    </alternativeName>
</protein>
<keyword id="KW-0067">ATP-binding</keyword>
<keyword id="KW-0963">Cytoplasm</keyword>
<keyword id="KW-0227">DNA damage</keyword>
<keyword id="KW-0233">DNA recombination</keyword>
<keyword id="KW-0234">DNA repair</keyword>
<keyword id="KW-0238">DNA-binding</keyword>
<keyword id="KW-0547">Nucleotide-binding</keyword>
<keyword id="KW-0742">SOS response</keyword>
<feature type="chain" id="PRO_1000114373" description="Protein RecA">
    <location>
        <begin position="1"/>
        <end position="388"/>
    </location>
</feature>
<feature type="region of interest" description="Disordered" evidence="2">
    <location>
        <begin position="347"/>
        <end position="388"/>
    </location>
</feature>
<feature type="compositionally biased region" description="Basic and acidic residues" evidence="2">
    <location>
        <begin position="357"/>
        <end position="369"/>
    </location>
</feature>
<feature type="compositionally biased region" description="Acidic residues" evidence="2">
    <location>
        <begin position="370"/>
        <end position="388"/>
    </location>
</feature>
<feature type="binding site" evidence="1">
    <location>
        <begin position="79"/>
        <end position="86"/>
    </location>
    <ligand>
        <name>ATP</name>
        <dbReference type="ChEBI" id="CHEBI:30616"/>
    </ligand>
</feature>
<dbReference type="EMBL" id="CP001015">
    <property type="protein sequence ID" value="ACF56862.1"/>
    <property type="molecule type" value="Genomic_DNA"/>
</dbReference>
<dbReference type="SMR" id="B5E2E0"/>
<dbReference type="KEGG" id="spx:SPG_1849"/>
<dbReference type="HOGENOM" id="CLU_040469_3_2_9"/>
<dbReference type="GO" id="GO:0005829">
    <property type="term" value="C:cytosol"/>
    <property type="evidence" value="ECO:0007669"/>
    <property type="project" value="TreeGrafter"/>
</dbReference>
<dbReference type="GO" id="GO:0005524">
    <property type="term" value="F:ATP binding"/>
    <property type="evidence" value="ECO:0007669"/>
    <property type="project" value="UniProtKB-UniRule"/>
</dbReference>
<dbReference type="GO" id="GO:0016887">
    <property type="term" value="F:ATP hydrolysis activity"/>
    <property type="evidence" value="ECO:0007669"/>
    <property type="project" value="InterPro"/>
</dbReference>
<dbReference type="GO" id="GO:0140664">
    <property type="term" value="F:ATP-dependent DNA damage sensor activity"/>
    <property type="evidence" value="ECO:0007669"/>
    <property type="project" value="InterPro"/>
</dbReference>
<dbReference type="GO" id="GO:0003684">
    <property type="term" value="F:damaged DNA binding"/>
    <property type="evidence" value="ECO:0007669"/>
    <property type="project" value="UniProtKB-UniRule"/>
</dbReference>
<dbReference type="GO" id="GO:0003697">
    <property type="term" value="F:single-stranded DNA binding"/>
    <property type="evidence" value="ECO:0007669"/>
    <property type="project" value="UniProtKB-UniRule"/>
</dbReference>
<dbReference type="GO" id="GO:0006310">
    <property type="term" value="P:DNA recombination"/>
    <property type="evidence" value="ECO:0007669"/>
    <property type="project" value="UniProtKB-UniRule"/>
</dbReference>
<dbReference type="GO" id="GO:0006281">
    <property type="term" value="P:DNA repair"/>
    <property type="evidence" value="ECO:0007669"/>
    <property type="project" value="UniProtKB-UniRule"/>
</dbReference>
<dbReference type="GO" id="GO:0009432">
    <property type="term" value="P:SOS response"/>
    <property type="evidence" value="ECO:0007669"/>
    <property type="project" value="UniProtKB-UniRule"/>
</dbReference>
<dbReference type="CDD" id="cd00983">
    <property type="entry name" value="RecA"/>
    <property type="match status" value="1"/>
</dbReference>
<dbReference type="FunFam" id="3.40.50.300:FF:000087">
    <property type="entry name" value="Recombinase RecA"/>
    <property type="match status" value="1"/>
</dbReference>
<dbReference type="Gene3D" id="3.40.50.300">
    <property type="entry name" value="P-loop containing nucleotide triphosphate hydrolases"/>
    <property type="match status" value="1"/>
</dbReference>
<dbReference type="HAMAP" id="MF_00268">
    <property type="entry name" value="RecA"/>
    <property type="match status" value="1"/>
</dbReference>
<dbReference type="InterPro" id="IPR003593">
    <property type="entry name" value="AAA+_ATPase"/>
</dbReference>
<dbReference type="InterPro" id="IPR013765">
    <property type="entry name" value="DNA_recomb/repair_RecA"/>
</dbReference>
<dbReference type="InterPro" id="IPR020584">
    <property type="entry name" value="DNA_recomb/repair_RecA_CS"/>
</dbReference>
<dbReference type="InterPro" id="IPR027417">
    <property type="entry name" value="P-loop_NTPase"/>
</dbReference>
<dbReference type="InterPro" id="IPR049261">
    <property type="entry name" value="RecA-like_C"/>
</dbReference>
<dbReference type="InterPro" id="IPR049428">
    <property type="entry name" value="RecA-like_N"/>
</dbReference>
<dbReference type="InterPro" id="IPR020588">
    <property type="entry name" value="RecA_ATP-bd"/>
</dbReference>
<dbReference type="InterPro" id="IPR023400">
    <property type="entry name" value="RecA_C_sf"/>
</dbReference>
<dbReference type="InterPro" id="IPR020587">
    <property type="entry name" value="RecA_monomer-monomer_interface"/>
</dbReference>
<dbReference type="NCBIfam" id="TIGR02012">
    <property type="entry name" value="tigrfam_recA"/>
    <property type="match status" value="1"/>
</dbReference>
<dbReference type="PANTHER" id="PTHR45900:SF1">
    <property type="entry name" value="MITOCHONDRIAL DNA REPAIR PROTEIN RECA HOMOLOG-RELATED"/>
    <property type="match status" value="1"/>
</dbReference>
<dbReference type="PANTHER" id="PTHR45900">
    <property type="entry name" value="RECA"/>
    <property type="match status" value="1"/>
</dbReference>
<dbReference type="Pfam" id="PF00154">
    <property type="entry name" value="RecA"/>
    <property type="match status" value="1"/>
</dbReference>
<dbReference type="Pfam" id="PF21096">
    <property type="entry name" value="RecA_C"/>
    <property type="match status" value="1"/>
</dbReference>
<dbReference type="PRINTS" id="PR00142">
    <property type="entry name" value="RECA"/>
</dbReference>
<dbReference type="SMART" id="SM00382">
    <property type="entry name" value="AAA"/>
    <property type="match status" value="1"/>
</dbReference>
<dbReference type="SUPFAM" id="SSF52540">
    <property type="entry name" value="P-loop containing nucleoside triphosphate hydrolases"/>
    <property type="match status" value="1"/>
</dbReference>
<dbReference type="SUPFAM" id="SSF54752">
    <property type="entry name" value="RecA protein, C-terminal domain"/>
    <property type="match status" value="1"/>
</dbReference>
<dbReference type="PROSITE" id="PS00321">
    <property type="entry name" value="RECA_1"/>
    <property type="match status" value="1"/>
</dbReference>
<dbReference type="PROSITE" id="PS50162">
    <property type="entry name" value="RECA_2"/>
    <property type="match status" value="1"/>
</dbReference>
<dbReference type="PROSITE" id="PS50163">
    <property type="entry name" value="RECA_3"/>
    <property type="match status" value="1"/>
</dbReference>
<reference key="1">
    <citation type="journal article" date="2001" name="Microb. Drug Resist.">
        <title>Annotated draft genomic sequence from a Streptococcus pneumoniae type 19F clinical isolate.</title>
        <authorList>
            <person name="Dopazo J."/>
            <person name="Mendoza A."/>
            <person name="Herrero J."/>
            <person name="Caldara F."/>
            <person name="Humbert Y."/>
            <person name="Friedli L."/>
            <person name="Guerrier M."/>
            <person name="Grand-Schenk E."/>
            <person name="Gandin C."/>
            <person name="de Francesco M."/>
            <person name="Polissi A."/>
            <person name="Buell G."/>
            <person name="Feger G."/>
            <person name="Garcia E."/>
            <person name="Peitsch M."/>
            <person name="Garcia-Bustos J.F."/>
        </authorList>
    </citation>
    <scope>NUCLEOTIDE SEQUENCE [LARGE SCALE GENOMIC DNA]</scope>
    <source>
        <strain>G54</strain>
    </source>
</reference>
<reference key="2">
    <citation type="submission" date="2008-03" db="EMBL/GenBank/DDBJ databases">
        <title>Pneumococcal beta glucoside metabolism investigated by whole genome comparison.</title>
        <authorList>
            <person name="Mulas L."/>
            <person name="Trappetti C."/>
            <person name="Hakenbeck R."/>
            <person name="Iannelli F."/>
            <person name="Pozzi G."/>
            <person name="Davidsen T.M."/>
            <person name="Tettelin H."/>
            <person name="Oggioni M."/>
        </authorList>
    </citation>
    <scope>NUCLEOTIDE SEQUENCE [LARGE SCALE GENOMIC DNA]</scope>
    <source>
        <strain>G54</strain>
    </source>
</reference>
<comment type="function">
    <text evidence="1">Can catalyze the hydrolysis of ATP in the presence of single-stranded DNA, the ATP-dependent uptake of single-stranded DNA by duplex DNA, and the ATP-dependent hybridization of homologous single-stranded DNAs. It interacts with LexA causing its activation and leading to its autocatalytic cleavage.</text>
</comment>
<comment type="subcellular location">
    <subcellularLocation>
        <location evidence="1">Cytoplasm</location>
    </subcellularLocation>
</comment>
<comment type="similarity">
    <text evidence="1">Belongs to the RecA family.</text>
</comment>
<sequence length="388" mass="41950">MAKKPKKLEEISKKFGAEREKALNDALKLIEKDFGKGSIMRLGERAEQKVQVMSSGSLALDIALGSGGYPKGRIIEIYGPESSGKTTVALHAVAQAQKEGGIAAFIDAEHALDPAYAAALGVNIDELLLSQPDSGEQGLEIAGKLIDSGAVDLVVVDSVAALVPRAEIDGDIGDSHVGLQARMMSQAMRKLGASINKTKTIAIFINQLREKVGVMFGNPETTPGGRALKFYASVRLDVRGNTQIKGTGDQKETNVGKETKIKVVKNKVAPPFKEAVVEIMYGEGISKTGELLKIASDLDIIKKAGAWYSYKDEKIGQGSENAKKYLAEHPEIFDEIDKQVRSKFGLIDGEEVSEQDTENKKDEPKKEEAVNEEVPLDLGDELEIEIEE</sequence>
<name>RECA_STRP4</name>
<evidence type="ECO:0000255" key="1">
    <source>
        <dbReference type="HAMAP-Rule" id="MF_00268"/>
    </source>
</evidence>
<evidence type="ECO:0000256" key="2">
    <source>
        <dbReference type="SAM" id="MobiDB-lite"/>
    </source>
</evidence>